<evidence type="ECO:0000255" key="1">
    <source>
        <dbReference type="HAMAP-Rule" id="MF_00268"/>
    </source>
</evidence>
<organism>
    <name type="scientific">Bordetella bronchiseptica (strain ATCC BAA-588 / NCTC 13252 / RB50)</name>
    <name type="common">Alcaligenes bronchisepticus</name>
    <dbReference type="NCBI Taxonomy" id="257310"/>
    <lineage>
        <taxon>Bacteria</taxon>
        <taxon>Pseudomonadati</taxon>
        <taxon>Pseudomonadota</taxon>
        <taxon>Betaproteobacteria</taxon>
        <taxon>Burkholderiales</taxon>
        <taxon>Alcaligenaceae</taxon>
        <taxon>Bordetella</taxon>
    </lineage>
</organism>
<gene>
    <name evidence="1" type="primary">recA</name>
    <name type="ordered locus">BB2076</name>
</gene>
<name>RECA_BORBR</name>
<dbReference type="EMBL" id="BX640443">
    <property type="protein sequence ID" value="CAE32572.1"/>
    <property type="molecule type" value="Genomic_DNA"/>
</dbReference>
<dbReference type="RefSeq" id="WP_003812760.1">
    <property type="nucleotide sequence ID" value="NC_002927.3"/>
</dbReference>
<dbReference type="SMR" id="P0A449"/>
<dbReference type="GeneID" id="93204418"/>
<dbReference type="KEGG" id="bbr:BB2076"/>
<dbReference type="eggNOG" id="COG0468">
    <property type="taxonomic scope" value="Bacteria"/>
</dbReference>
<dbReference type="HOGENOM" id="CLU_040469_1_2_4"/>
<dbReference type="Proteomes" id="UP000001027">
    <property type="component" value="Chromosome"/>
</dbReference>
<dbReference type="GO" id="GO:0005829">
    <property type="term" value="C:cytosol"/>
    <property type="evidence" value="ECO:0007669"/>
    <property type="project" value="TreeGrafter"/>
</dbReference>
<dbReference type="GO" id="GO:0005524">
    <property type="term" value="F:ATP binding"/>
    <property type="evidence" value="ECO:0007669"/>
    <property type="project" value="UniProtKB-UniRule"/>
</dbReference>
<dbReference type="GO" id="GO:0016887">
    <property type="term" value="F:ATP hydrolysis activity"/>
    <property type="evidence" value="ECO:0007669"/>
    <property type="project" value="InterPro"/>
</dbReference>
<dbReference type="GO" id="GO:0140664">
    <property type="term" value="F:ATP-dependent DNA damage sensor activity"/>
    <property type="evidence" value="ECO:0007669"/>
    <property type="project" value="InterPro"/>
</dbReference>
<dbReference type="GO" id="GO:0003684">
    <property type="term" value="F:damaged DNA binding"/>
    <property type="evidence" value="ECO:0007669"/>
    <property type="project" value="UniProtKB-UniRule"/>
</dbReference>
<dbReference type="GO" id="GO:0003697">
    <property type="term" value="F:single-stranded DNA binding"/>
    <property type="evidence" value="ECO:0007669"/>
    <property type="project" value="UniProtKB-UniRule"/>
</dbReference>
<dbReference type="GO" id="GO:0006310">
    <property type="term" value="P:DNA recombination"/>
    <property type="evidence" value="ECO:0007669"/>
    <property type="project" value="UniProtKB-UniRule"/>
</dbReference>
<dbReference type="GO" id="GO:0006281">
    <property type="term" value="P:DNA repair"/>
    <property type="evidence" value="ECO:0007669"/>
    <property type="project" value="UniProtKB-UniRule"/>
</dbReference>
<dbReference type="GO" id="GO:0009432">
    <property type="term" value="P:SOS response"/>
    <property type="evidence" value="ECO:0007669"/>
    <property type="project" value="UniProtKB-UniRule"/>
</dbReference>
<dbReference type="CDD" id="cd00983">
    <property type="entry name" value="RecA"/>
    <property type="match status" value="1"/>
</dbReference>
<dbReference type="FunFam" id="3.40.50.300:FF:000087">
    <property type="entry name" value="Recombinase RecA"/>
    <property type="match status" value="1"/>
</dbReference>
<dbReference type="Gene3D" id="3.40.50.300">
    <property type="entry name" value="P-loop containing nucleotide triphosphate hydrolases"/>
    <property type="match status" value="1"/>
</dbReference>
<dbReference type="HAMAP" id="MF_00268">
    <property type="entry name" value="RecA"/>
    <property type="match status" value="1"/>
</dbReference>
<dbReference type="InterPro" id="IPR003593">
    <property type="entry name" value="AAA+_ATPase"/>
</dbReference>
<dbReference type="InterPro" id="IPR013765">
    <property type="entry name" value="DNA_recomb/repair_RecA"/>
</dbReference>
<dbReference type="InterPro" id="IPR020584">
    <property type="entry name" value="DNA_recomb/repair_RecA_CS"/>
</dbReference>
<dbReference type="InterPro" id="IPR027417">
    <property type="entry name" value="P-loop_NTPase"/>
</dbReference>
<dbReference type="InterPro" id="IPR049261">
    <property type="entry name" value="RecA-like_C"/>
</dbReference>
<dbReference type="InterPro" id="IPR049428">
    <property type="entry name" value="RecA-like_N"/>
</dbReference>
<dbReference type="InterPro" id="IPR020588">
    <property type="entry name" value="RecA_ATP-bd"/>
</dbReference>
<dbReference type="InterPro" id="IPR023400">
    <property type="entry name" value="RecA_C_sf"/>
</dbReference>
<dbReference type="InterPro" id="IPR020587">
    <property type="entry name" value="RecA_monomer-monomer_interface"/>
</dbReference>
<dbReference type="NCBIfam" id="TIGR02012">
    <property type="entry name" value="tigrfam_recA"/>
    <property type="match status" value="1"/>
</dbReference>
<dbReference type="PANTHER" id="PTHR45900:SF1">
    <property type="entry name" value="MITOCHONDRIAL DNA REPAIR PROTEIN RECA HOMOLOG-RELATED"/>
    <property type="match status" value="1"/>
</dbReference>
<dbReference type="PANTHER" id="PTHR45900">
    <property type="entry name" value="RECA"/>
    <property type="match status" value="1"/>
</dbReference>
<dbReference type="Pfam" id="PF00154">
    <property type="entry name" value="RecA"/>
    <property type="match status" value="1"/>
</dbReference>
<dbReference type="Pfam" id="PF21096">
    <property type="entry name" value="RecA_C"/>
    <property type="match status" value="1"/>
</dbReference>
<dbReference type="PRINTS" id="PR00142">
    <property type="entry name" value="RECA"/>
</dbReference>
<dbReference type="SMART" id="SM00382">
    <property type="entry name" value="AAA"/>
    <property type="match status" value="1"/>
</dbReference>
<dbReference type="SUPFAM" id="SSF52540">
    <property type="entry name" value="P-loop containing nucleoside triphosphate hydrolases"/>
    <property type="match status" value="1"/>
</dbReference>
<dbReference type="SUPFAM" id="SSF54752">
    <property type="entry name" value="RecA protein, C-terminal domain"/>
    <property type="match status" value="1"/>
</dbReference>
<dbReference type="PROSITE" id="PS00321">
    <property type="entry name" value="RECA_1"/>
    <property type="match status" value="1"/>
</dbReference>
<dbReference type="PROSITE" id="PS50162">
    <property type="entry name" value="RECA_2"/>
    <property type="match status" value="1"/>
</dbReference>
<dbReference type="PROSITE" id="PS50163">
    <property type="entry name" value="RECA_3"/>
    <property type="match status" value="1"/>
</dbReference>
<accession>P0A449</accession>
<accession>P17740</accession>
<protein>
    <recommendedName>
        <fullName evidence="1">Protein RecA</fullName>
    </recommendedName>
    <alternativeName>
        <fullName evidence="1">Recombinase A</fullName>
    </alternativeName>
</protein>
<sequence>MDDKTSKAAAAEKAKALAAALSQIEKQFGKGSIMRYGDNEVEHDIQVVSTGSLGLDIALGVGGLPRGRVIEVYGPESSGKTTLTLQVIAEMQKLGGTCAFVDAEHALDVQYASKLGVNLTDLLISQPDTGEQALEITDALVRSGSVDLIVIDSVAALVPKAEIEGEMGDSLPGLQARLMSQALRKLTATIKRTNCMVIFINQIRMKIGVMFGNPETTTGGNALKFYSSVRLDIRRIGAIKKGDEVVGNETRVKVVKNKVAPPFKQAEFDIMYGSGISREGEIIDLGVQANVVDKSGAWYSYSGNRIGQGKDNVREYLKEHKEMAIEIENKVRENQGIVSRAATFPASEAEDGE</sequence>
<keyword id="KW-0067">ATP-binding</keyword>
<keyword id="KW-0963">Cytoplasm</keyword>
<keyword id="KW-0227">DNA damage</keyword>
<keyword id="KW-0233">DNA recombination</keyword>
<keyword id="KW-0234">DNA repair</keyword>
<keyword id="KW-0238">DNA-binding</keyword>
<keyword id="KW-0547">Nucleotide-binding</keyword>
<keyword id="KW-0742">SOS response</keyword>
<reference key="1">
    <citation type="journal article" date="2003" name="Nat. Genet.">
        <title>Comparative analysis of the genome sequences of Bordetella pertussis, Bordetella parapertussis and Bordetella bronchiseptica.</title>
        <authorList>
            <person name="Parkhill J."/>
            <person name="Sebaihia M."/>
            <person name="Preston A."/>
            <person name="Murphy L.D."/>
            <person name="Thomson N.R."/>
            <person name="Harris D.E."/>
            <person name="Holden M.T.G."/>
            <person name="Churcher C.M."/>
            <person name="Bentley S.D."/>
            <person name="Mungall K.L."/>
            <person name="Cerdeno-Tarraga A.-M."/>
            <person name="Temple L."/>
            <person name="James K.D."/>
            <person name="Harris B."/>
            <person name="Quail M.A."/>
            <person name="Achtman M."/>
            <person name="Atkin R."/>
            <person name="Baker S."/>
            <person name="Basham D."/>
            <person name="Bason N."/>
            <person name="Cherevach I."/>
            <person name="Chillingworth T."/>
            <person name="Collins M."/>
            <person name="Cronin A."/>
            <person name="Davis P."/>
            <person name="Doggett J."/>
            <person name="Feltwell T."/>
            <person name="Goble A."/>
            <person name="Hamlin N."/>
            <person name="Hauser H."/>
            <person name="Holroyd S."/>
            <person name="Jagels K."/>
            <person name="Leather S."/>
            <person name="Moule S."/>
            <person name="Norberczak H."/>
            <person name="O'Neil S."/>
            <person name="Ormond D."/>
            <person name="Price C."/>
            <person name="Rabbinowitsch E."/>
            <person name="Rutter S."/>
            <person name="Sanders M."/>
            <person name="Saunders D."/>
            <person name="Seeger K."/>
            <person name="Sharp S."/>
            <person name="Simmonds M."/>
            <person name="Skelton J."/>
            <person name="Squares R."/>
            <person name="Squares S."/>
            <person name="Stevens K."/>
            <person name="Unwin L."/>
            <person name="Whitehead S."/>
            <person name="Barrell B.G."/>
            <person name="Maskell D.J."/>
        </authorList>
    </citation>
    <scope>NUCLEOTIDE SEQUENCE [LARGE SCALE GENOMIC DNA]</scope>
    <source>
        <strain>ATCC BAA-588 / NCTC 13252 / RB50</strain>
    </source>
</reference>
<proteinExistence type="inferred from homology"/>
<comment type="function">
    <text evidence="1">Can catalyze the hydrolysis of ATP in the presence of single-stranded DNA, the ATP-dependent uptake of single-stranded DNA by duplex DNA, and the ATP-dependent hybridization of homologous single-stranded DNAs. It interacts with LexA causing its activation and leading to its autocatalytic cleavage.</text>
</comment>
<comment type="subcellular location">
    <subcellularLocation>
        <location evidence="1">Cytoplasm</location>
    </subcellularLocation>
</comment>
<comment type="similarity">
    <text evidence="1">Belongs to the RecA family.</text>
</comment>
<feature type="chain" id="PRO_0000122663" description="Protein RecA">
    <location>
        <begin position="1"/>
        <end position="353"/>
    </location>
</feature>
<feature type="binding site" evidence="1">
    <location>
        <begin position="74"/>
        <end position="81"/>
    </location>
    <ligand>
        <name>ATP</name>
        <dbReference type="ChEBI" id="CHEBI:30616"/>
    </ligand>
</feature>